<proteinExistence type="evidence at transcript level"/>
<feature type="chain" id="PRO_0000192875" description="Small ribosomal subunit protein eS25">
    <location>
        <begin position="1"/>
        <end position="123"/>
    </location>
</feature>
<feature type="region of interest" description="Disordered" evidence="1">
    <location>
        <begin position="1"/>
        <end position="34"/>
    </location>
</feature>
<feature type="compositionally biased region" description="Basic and acidic residues" evidence="1">
    <location>
        <begin position="1"/>
        <end position="13"/>
    </location>
</feature>
<feature type="compositionally biased region" description="Basic residues" evidence="1">
    <location>
        <begin position="25"/>
        <end position="34"/>
    </location>
</feature>
<keyword id="KW-1185">Reference proteome</keyword>
<keyword id="KW-0687">Ribonucleoprotein</keyword>
<keyword id="KW-0689">Ribosomal protein</keyword>
<accession>Q8ISN9</accession>
<name>RS25_BRABE</name>
<dbReference type="EMBL" id="AF548336">
    <property type="protein sequence ID" value="AAN52391.1"/>
    <property type="molecule type" value="mRNA"/>
</dbReference>
<dbReference type="SMR" id="Q8ISN9"/>
<dbReference type="OrthoDB" id="10263513at2759"/>
<dbReference type="Proteomes" id="UP000515135">
    <property type="component" value="Unplaced"/>
</dbReference>
<dbReference type="GO" id="GO:1990904">
    <property type="term" value="C:ribonucleoprotein complex"/>
    <property type="evidence" value="ECO:0007669"/>
    <property type="project" value="UniProtKB-KW"/>
</dbReference>
<dbReference type="GO" id="GO:0005840">
    <property type="term" value="C:ribosome"/>
    <property type="evidence" value="ECO:0007669"/>
    <property type="project" value="UniProtKB-KW"/>
</dbReference>
<dbReference type="FunFam" id="1.10.10.10:FF:000166">
    <property type="entry name" value="40S ribosomal protein S25"/>
    <property type="match status" value="1"/>
</dbReference>
<dbReference type="FunFam" id="3.30.63.20:FF:000001">
    <property type="entry name" value="40S ribosomal protein S25"/>
    <property type="match status" value="1"/>
</dbReference>
<dbReference type="Gene3D" id="3.30.63.20">
    <property type="match status" value="1"/>
</dbReference>
<dbReference type="InterPro" id="IPR004977">
    <property type="entry name" value="Ribosomal_eS25"/>
</dbReference>
<dbReference type="PANTHER" id="PTHR12850">
    <property type="entry name" value="40S RIBOSOMAL PROTEIN S25"/>
    <property type="match status" value="1"/>
</dbReference>
<dbReference type="Pfam" id="PF03297">
    <property type="entry name" value="Ribosomal_S25"/>
    <property type="match status" value="1"/>
</dbReference>
<evidence type="ECO:0000256" key="1">
    <source>
        <dbReference type="SAM" id="MobiDB-lite"/>
    </source>
</evidence>
<evidence type="ECO:0000305" key="2"/>
<gene>
    <name type="primary">RPS25</name>
</gene>
<comment type="similarity">
    <text evidence="2">Belongs to the eukaryotic ribosomal protein eS25 family.</text>
</comment>
<organism>
    <name type="scientific">Branchiostoma belcheri</name>
    <name type="common">Amphioxus</name>
    <dbReference type="NCBI Taxonomy" id="7741"/>
    <lineage>
        <taxon>Eukaryota</taxon>
        <taxon>Metazoa</taxon>
        <taxon>Chordata</taxon>
        <taxon>Cephalochordata</taxon>
        <taxon>Leptocardii</taxon>
        <taxon>Amphioxiformes</taxon>
        <taxon>Branchiostomatidae</taxon>
        <taxon>Branchiostoma</taxon>
    </lineage>
</organism>
<protein>
    <recommendedName>
        <fullName evidence="2">Small ribosomal subunit protein eS25</fullName>
    </recommendedName>
    <alternativeName>
        <fullName>40S ribosomal protein S25</fullName>
    </alternativeName>
</protein>
<sequence length="123" mass="13676">MPPKKDTKGDSKKGQKAKAGSGGGKAKKKKWSKGKVRDKLNNLVLFDKATYDKLYKEVPSYKLITPSVVSERLKIRGSLARAALKELHSKGMIKLVSKHSAQVIYTRATKDTDSKIVLRRGHQ</sequence>
<reference key="1">
    <citation type="submission" date="2002-09" db="EMBL/GenBank/DDBJ databases">
        <title>Cloning of ribosomal protein S25 gene of amphioxus.</title>
        <authorList>
            <person name="Chen Z.K."/>
            <person name="Zhang H.W."/>
            <person name="Yang H.M."/>
        </authorList>
    </citation>
    <scope>NUCLEOTIDE SEQUENCE [MRNA]</scope>
</reference>